<feature type="chain" id="PRO_0000091585" description="Protein-methionine-sulfoxide reductase heme-binding subunit MsrQ">
    <location>
        <begin position="1"/>
        <end position="211"/>
    </location>
</feature>
<feature type="transmembrane region" description="Helical" evidence="1">
    <location>
        <begin position="8"/>
        <end position="28"/>
    </location>
</feature>
<feature type="transmembrane region" description="Helical" evidence="1">
    <location>
        <begin position="54"/>
        <end position="74"/>
    </location>
</feature>
<feature type="transmembrane region" description="Helical" evidence="1">
    <location>
        <begin position="82"/>
        <end position="102"/>
    </location>
</feature>
<feature type="transmembrane region" description="Helical" evidence="1">
    <location>
        <begin position="116"/>
        <end position="136"/>
    </location>
</feature>
<feature type="transmembrane region" description="Helical" evidence="1">
    <location>
        <begin position="153"/>
        <end position="173"/>
    </location>
</feature>
<feature type="transmembrane region" description="Helical" evidence="1">
    <location>
        <begin position="178"/>
        <end position="198"/>
    </location>
</feature>
<dbReference type="EMBL" id="AE005674">
    <property type="protein sequence ID" value="AAN43563.1"/>
    <property type="molecule type" value="Genomic_DNA"/>
</dbReference>
<dbReference type="EMBL" id="AE014073">
    <property type="protein sequence ID" value="AAP17389.1"/>
    <property type="molecule type" value="Genomic_DNA"/>
</dbReference>
<dbReference type="RefSeq" id="NP_707856.1">
    <property type="nucleotide sequence ID" value="NC_004337.2"/>
</dbReference>
<dbReference type="RefSeq" id="WP_001240061.1">
    <property type="nucleotide sequence ID" value="NZ_WPGW01000218.1"/>
</dbReference>
<dbReference type="SMR" id="Q83KM2"/>
<dbReference type="STRING" id="198214.SF2019"/>
<dbReference type="PaxDb" id="198214-SF2019"/>
<dbReference type="GeneID" id="1025249"/>
<dbReference type="GeneID" id="86946885"/>
<dbReference type="KEGG" id="sfl:SF2019"/>
<dbReference type="KEGG" id="sfx:S2116"/>
<dbReference type="PATRIC" id="fig|198214.7.peg.2412"/>
<dbReference type="HOGENOM" id="CLU_080662_0_1_6"/>
<dbReference type="Proteomes" id="UP000001006">
    <property type="component" value="Chromosome"/>
</dbReference>
<dbReference type="Proteomes" id="UP000002673">
    <property type="component" value="Chromosome"/>
</dbReference>
<dbReference type="GO" id="GO:0005886">
    <property type="term" value="C:plasma membrane"/>
    <property type="evidence" value="ECO:0007669"/>
    <property type="project" value="UniProtKB-SubCell"/>
</dbReference>
<dbReference type="GO" id="GO:0009055">
    <property type="term" value="F:electron transfer activity"/>
    <property type="evidence" value="ECO:0007669"/>
    <property type="project" value="UniProtKB-UniRule"/>
</dbReference>
<dbReference type="GO" id="GO:0010181">
    <property type="term" value="F:FMN binding"/>
    <property type="evidence" value="ECO:0007669"/>
    <property type="project" value="UniProtKB-UniRule"/>
</dbReference>
<dbReference type="GO" id="GO:0020037">
    <property type="term" value="F:heme binding"/>
    <property type="evidence" value="ECO:0007669"/>
    <property type="project" value="UniProtKB-UniRule"/>
</dbReference>
<dbReference type="GO" id="GO:0046872">
    <property type="term" value="F:metal ion binding"/>
    <property type="evidence" value="ECO:0007669"/>
    <property type="project" value="UniProtKB-KW"/>
</dbReference>
<dbReference type="GO" id="GO:0016679">
    <property type="term" value="F:oxidoreductase activity, acting on diphenols and related substances as donors"/>
    <property type="evidence" value="ECO:0007669"/>
    <property type="project" value="TreeGrafter"/>
</dbReference>
<dbReference type="GO" id="GO:0030091">
    <property type="term" value="P:protein repair"/>
    <property type="evidence" value="ECO:0007669"/>
    <property type="project" value="UniProtKB-UniRule"/>
</dbReference>
<dbReference type="HAMAP" id="MF_01207">
    <property type="entry name" value="MsrQ"/>
    <property type="match status" value="1"/>
</dbReference>
<dbReference type="InterPro" id="IPR013130">
    <property type="entry name" value="Fe3_Rdtase_TM_dom"/>
</dbReference>
<dbReference type="InterPro" id="IPR022837">
    <property type="entry name" value="MsrQ-like"/>
</dbReference>
<dbReference type="NCBIfam" id="NF003830">
    <property type="entry name" value="PRK05419.1-1"/>
    <property type="match status" value="1"/>
</dbReference>
<dbReference type="NCBIfam" id="NF003831">
    <property type="entry name" value="PRK05419.1-2"/>
    <property type="match status" value="1"/>
</dbReference>
<dbReference type="NCBIfam" id="NF003832">
    <property type="entry name" value="PRK05419.1-4"/>
    <property type="match status" value="1"/>
</dbReference>
<dbReference type="PANTHER" id="PTHR36964">
    <property type="entry name" value="PROTEIN-METHIONINE-SULFOXIDE REDUCTASE HEME-BINDING SUBUNIT MSRQ"/>
    <property type="match status" value="1"/>
</dbReference>
<dbReference type="PANTHER" id="PTHR36964:SF1">
    <property type="entry name" value="PROTEIN-METHIONINE-SULFOXIDE REDUCTASE HEME-BINDING SUBUNIT MSRQ"/>
    <property type="match status" value="1"/>
</dbReference>
<dbReference type="Pfam" id="PF01794">
    <property type="entry name" value="Ferric_reduct"/>
    <property type="match status" value="1"/>
</dbReference>
<reference key="1">
    <citation type="journal article" date="2002" name="Nucleic Acids Res.">
        <title>Genome sequence of Shigella flexneri 2a: insights into pathogenicity through comparison with genomes of Escherichia coli K12 and O157.</title>
        <authorList>
            <person name="Jin Q."/>
            <person name="Yuan Z."/>
            <person name="Xu J."/>
            <person name="Wang Y."/>
            <person name="Shen Y."/>
            <person name="Lu W."/>
            <person name="Wang J."/>
            <person name="Liu H."/>
            <person name="Yang J."/>
            <person name="Yang F."/>
            <person name="Zhang X."/>
            <person name="Zhang J."/>
            <person name="Yang G."/>
            <person name="Wu H."/>
            <person name="Qu D."/>
            <person name="Dong J."/>
            <person name="Sun L."/>
            <person name="Xue Y."/>
            <person name="Zhao A."/>
            <person name="Gao Y."/>
            <person name="Zhu J."/>
            <person name="Kan B."/>
            <person name="Ding K."/>
            <person name="Chen S."/>
            <person name="Cheng H."/>
            <person name="Yao Z."/>
            <person name="He B."/>
            <person name="Chen R."/>
            <person name="Ma D."/>
            <person name="Qiang B."/>
            <person name="Wen Y."/>
            <person name="Hou Y."/>
            <person name="Yu J."/>
        </authorList>
    </citation>
    <scope>NUCLEOTIDE SEQUENCE [LARGE SCALE GENOMIC DNA]</scope>
    <source>
        <strain>301 / Serotype 2a</strain>
    </source>
</reference>
<reference key="2">
    <citation type="journal article" date="2003" name="Infect. Immun.">
        <title>Complete genome sequence and comparative genomics of Shigella flexneri serotype 2a strain 2457T.</title>
        <authorList>
            <person name="Wei J."/>
            <person name="Goldberg M.B."/>
            <person name="Burland V."/>
            <person name="Venkatesan M.M."/>
            <person name="Deng W."/>
            <person name="Fournier G."/>
            <person name="Mayhew G.F."/>
            <person name="Plunkett G. III"/>
            <person name="Rose D.J."/>
            <person name="Darling A."/>
            <person name="Mau B."/>
            <person name="Perna N.T."/>
            <person name="Payne S.M."/>
            <person name="Runyen-Janecky L.J."/>
            <person name="Zhou S."/>
            <person name="Schwartz D.C."/>
            <person name="Blattner F.R."/>
        </authorList>
    </citation>
    <scope>NUCLEOTIDE SEQUENCE [LARGE SCALE GENOMIC DNA]</scope>
    <source>
        <strain>ATCC 700930 / 2457T / Serotype 2a</strain>
    </source>
</reference>
<evidence type="ECO:0000255" key="1">
    <source>
        <dbReference type="HAMAP-Rule" id="MF_01207"/>
    </source>
</evidence>
<protein>
    <recommendedName>
        <fullName evidence="1">Protein-methionine-sulfoxide reductase heme-binding subunit MsrQ</fullName>
    </recommendedName>
    <alternativeName>
        <fullName evidence="1">Flavocytochrome MsrQ</fullName>
    </alternativeName>
</protein>
<name>MSRQ_SHIFL</name>
<comment type="function">
    <text evidence="1">Part of the MsrPQ system that repairs oxidized periplasmic proteins containing methionine sulfoxide residues (Met-O), using respiratory chain electrons. Thus protects these proteins from oxidative-stress damage caused by reactive species of oxygen and chlorine generated by the host defense mechanisms. MsrPQ is essential for the maintenance of envelope integrity under bleach stress, rescuing a wide series of structurally unrelated periplasmic proteins from methionine oxidation, including the primary periplasmic chaperone SurA and the lipoprotein Pal. MsrQ provides electrons for reduction to the reductase catalytic subunit MsrP, using the quinone pool of the respiratory chain.</text>
</comment>
<comment type="cofactor">
    <cofactor evidence="1">
        <name>FMN</name>
        <dbReference type="ChEBI" id="CHEBI:58210"/>
    </cofactor>
    <text evidence="1">Binds 1 FMN per subunit.</text>
</comment>
<comment type="cofactor">
    <cofactor evidence="1">
        <name>heme b</name>
        <dbReference type="ChEBI" id="CHEBI:60344"/>
    </cofactor>
    <text evidence="1">Binds 1 heme b (iron(II)-protoporphyrin IX) group per subunit.</text>
</comment>
<comment type="subunit">
    <text evidence="1">Heterodimer of a catalytic subunit (MsrP) and a heme-binding subunit (MsrQ).</text>
</comment>
<comment type="subcellular location">
    <subcellularLocation>
        <location evidence="1">Cell inner membrane</location>
        <topology evidence="1">Multi-pass membrane protein</topology>
    </subcellularLocation>
</comment>
<comment type="similarity">
    <text evidence="1">Belongs to the MsrQ family.</text>
</comment>
<gene>
    <name evidence="1" type="primary">msrQ</name>
    <name type="ordered locus">SF2019</name>
    <name type="ordered locus">S2116</name>
</gene>
<sequence length="211" mass="24009">MRLTAKQVIWLKVCLHLAGLLPFLWLVWAINHGGLGADPVKDIQHFTGRTALKFLLAALLITPLARYAKQPLLIRTRRLLGLWCFAWATLHLTSYALLELGVNNLALLGKELITRPYLTLGIISWVILLALAFTSTQSMQRKLGKHWQQLHNFVYLVAILAPIHYLWSVKIISPQPLIYAGLAVLLLALRYKKLLSLFNRLRKQAHNKLSL</sequence>
<proteinExistence type="inferred from homology"/>
<accession>Q83KM2</accession>
<keyword id="KW-0997">Cell inner membrane</keyword>
<keyword id="KW-1003">Cell membrane</keyword>
<keyword id="KW-0249">Electron transport</keyword>
<keyword id="KW-0285">Flavoprotein</keyword>
<keyword id="KW-0288">FMN</keyword>
<keyword id="KW-0349">Heme</keyword>
<keyword id="KW-0408">Iron</keyword>
<keyword id="KW-0472">Membrane</keyword>
<keyword id="KW-0479">Metal-binding</keyword>
<keyword id="KW-1185">Reference proteome</keyword>
<keyword id="KW-0812">Transmembrane</keyword>
<keyword id="KW-1133">Transmembrane helix</keyword>
<keyword id="KW-0813">Transport</keyword>
<organism>
    <name type="scientific">Shigella flexneri</name>
    <dbReference type="NCBI Taxonomy" id="623"/>
    <lineage>
        <taxon>Bacteria</taxon>
        <taxon>Pseudomonadati</taxon>
        <taxon>Pseudomonadota</taxon>
        <taxon>Gammaproteobacteria</taxon>
        <taxon>Enterobacterales</taxon>
        <taxon>Enterobacteriaceae</taxon>
        <taxon>Shigella</taxon>
    </lineage>
</organism>